<feature type="chain" id="PRO_0000100799" description="Phosphoribosylaminoimidazole-succinocarboxamide synthase">
    <location>
        <begin position="1"/>
        <end position="239"/>
    </location>
</feature>
<accession>Q81IQ6</accession>
<gene>
    <name evidence="1" type="primary">purC</name>
    <name type="ordered locus">BC_0326</name>
</gene>
<reference key="1">
    <citation type="journal article" date="2003" name="Nature">
        <title>Genome sequence of Bacillus cereus and comparative analysis with Bacillus anthracis.</title>
        <authorList>
            <person name="Ivanova N."/>
            <person name="Sorokin A."/>
            <person name="Anderson I."/>
            <person name="Galleron N."/>
            <person name="Candelon B."/>
            <person name="Kapatral V."/>
            <person name="Bhattacharyya A."/>
            <person name="Reznik G."/>
            <person name="Mikhailova N."/>
            <person name="Lapidus A."/>
            <person name="Chu L."/>
            <person name="Mazur M."/>
            <person name="Goltsman E."/>
            <person name="Larsen N."/>
            <person name="D'Souza M."/>
            <person name="Walunas T."/>
            <person name="Grechkin Y."/>
            <person name="Pusch G."/>
            <person name="Haselkorn R."/>
            <person name="Fonstein M."/>
            <person name="Ehrlich S.D."/>
            <person name="Overbeek R."/>
            <person name="Kyrpides N.C."/>
        </authorList>
    </citation>
    <scope>NUCLEOTIDE SEQUENCE [LARGE SCALE GENOMIC DNA]</scope>
    <source>
        <strain>ATCC 14579 / DSM 31 / CCUG 7414 / JCM 2152 / NBRC 15305 / NCIMB 9373 / NCTC 2599 / NRRL B-3711</strain>
    </source>
</reference>
<comment type="catalytic activity">
    <reaction evidence="1">
        <text>5-amino-1-(5-phospho-D-ribosyl)imidazole-4-carboxylate + L-aspartate + ATP = (2S)-2-[5-amino-1-(5-phospho-beta-D-ribosyl)imidazole-4-carboxamido]succinate + ADP + phosphate + 2 H(+)</text>
        <dbReference type="Rhea" id="RHEA:22628"/>
        <dbReference type="ChEBI" id="CHEBI:15378"/>
        <dbReference type="ChEBI" id="CHEBI:29991"/>
        <dbReference type="ChEBI" id="CHEBI:30616"/>
        <dbReference type="ChEBI" id="CHEBI:43474"/>
        <dbReference type="ChEBI" id="CHEBI:58443"/>
        <dbReference type="ChEBI" id="CHEBI:77657"/>
        <dbReference type="ChEBI" id="CHEBI:456216"/>
        <dbReference type="EC" id="6.3.2.6"/>
    </reaction>
</comment>
<comment type="pathway">
    <text evidence="1">Purine metabolism; IMP biosynthesis via de novo pathway; 5-amino-1-(5-phospho-D-ribosyl)imidazole-4-carboxamide from 5-amino-1-(5-phospho-D-ribosyl)imidazole-4-carboxylate: step 1/2.</text>
</comment>
<comment type="similarity">
    <text evidence="1">Belongs to the SAICAR synthetase family.</text>
</comment>
<comment type="sequence caution" evidence="2">
    <conflict type="erroneous initiation">
        <sequence resource="EMBL-CDS" id="AAP07366"/>
    </conflict>
</comment>
<organism>
    <name type="scientific">Bacillus cereus (strain ATCC 14579 / DSM 31 / CCUG 7414 / JCM 2152 / NBRC 15305 / NCIMB 9373 / NCTC 2599 / NRRL B-3711)</name>
    <dbReference type="NCBI Taxonomy" id="226900"/>
    <lineage>
        <taxon>Bacteria</taxon>
        <taxon>Bacillati</taxon>
        <taxon>Bacillota</taxon>
        <taxon>Bacilli</taxon>
        <taxon>Bacillales</taxon>
        <taxon>Bacillaceae</taxon>
        <taxon>Bacillus</taxon>
        <taxon>Bacillus cereus group</taxon>
    </lineage>
</organism>
<proteinExistence type="inferred from homology"/>
<evidence type="ECO:0000255" key="1">
    <source>
        <dbReference type="HAMAP-Rule" id="MF_00137"/>
    </source>
</evidence>
<evidence type="ECO:0000305" key="2"/>
<sequence>MQKLELLYEGKAKRIYRTESADMVWVEYKDSATAFNGEKKETITGKGRLNNEITTLLFRKLQEVGIKTHFVEKLSETEQLVKKVSIIPLEVVTRNVIAGSLSKRLGMEEGTVLAEPIVEFYFKDDDLGDPLVTEDHIRVLNVASPEQVSVLRDMALQINQVLIDHFASCRVRLVDFKLEFGVTEEGEIILADEISPDTCRLWDETSNEKFDKDVFRRDLGNLTDAYEEILKRLGGISHV</sequence>
<protein>
    <recommendedName>
        <fullName evidence="1">Phosphoribosylaminoimidazole-succinocarboxamide synthase</fullName>
        <ecNumber evidence="1">6.3.2.6</ecNumber>
    </recommendedName>
    <alternativeName>
        <fullName evidence="1">SAICAR synthetase</fullName>
    </alternativeName>
</protein>
<keyword id="KW-0067">ATP-binding</keyword>
<keyword id="KW-0436">Ligase</keyword>
<keyword id="KW-0547">Nucleotide-binding</keyword>
<keyword id="KW-0658">Purine biosynthesis</keyword>
<keyword id="KW-1185">Reference proteome</keyword>
<name>PUR7_BACCR</name>
<dbReference type="EC" id="6.3.2.6" evidence="1"/>
<dbReference type="EMBL" id="AE016877">
    <property type="protein sequence ID" value="AAP07366.1"/>
    <property type="status" value="ALT_INIT"/>
    <property type="molecule type" value="Genomic_DNA"/>
</dbReference>
<dbReference type="RefSeq" id="NP_830165.2">
    <property type="nucleotide sequence ID" value="NC_004722.1"/>
</dbReference>
<dbReference type="RefSeq" id="WP_001170544.1">
    <property type="nucleotide sequence ID" value="NZ_CP138336.1"/>
</dbReference>
<dbReference type="SMR" id="Q81IQ6"/>
<dbReference type="STRING" id="226900.BC_0326"/>
<dbReference type="MetOSite" id="Q81IQ6"/>
<dbReference type="KEGG" id="bce:BC0326"/>
<dbReference type="PATRIC" id="fig|226900.8.peg.298"/>
<dbReference type="HOGENOM" id="CLU_061495_2_0_9"/>
<dbReference type="OrthoDB" id="9801549at2"/>
<dbReference type="UniPathway" id="UPA00074">
    <property type="reaction ID" value="UER00131"/>
</dbReference>
<dbReference type="Proteomes" id="UP000001417">
    <property type="component" value="Chromosome"/>
</dbReference>
<dbReference type="GO" id="GO:0005524">
    <property type="term" value="F:ATP binding"/>
    <property type="evidence" value="ECO:0007669"/>
    <property type="project" value="UniProtKB-KW"/>
</dbReference>
<dbReference type="GO" id="GO:0004639">
    <property type="term" value="F:phosphoribosylaminoimidazolesuccinocarboxamide synthase activity"/>
    <property type="evidence" value="ECO:0007669"/>
    <property type="project" value="UniProtKB-UniRule"/>
</dbReference>
<dbReference type="GO" id="GO:0006189">
    <property type="term" value="P:'de novo' IMP biosynthetic process"/>
    <property type="evidence" value="ECO:0007669"/>
    <property type="project" value="UniProtKB-UniRule"/>
</dbReference>
<dbReference type="GO" id="GO:0009236">
    <property type="term" value="P:cobalamin biosynthetic process"/>
    <property type="evidence" value="ECO:0007669"/>
    <property type="project" value="InterPro"/>
</dbReference>
<dbReference type="CDD" id="cd01415">
    <property type="entry name" value="SAICAR_synt_PurC"/>
    <property type="match status" value="1"/>
</dbReference>
<dbReference type="FunFam" id="3.30.200.20:FF:000189">
    <property type="entry name" value="Phosphoribosylaminoimidazole-succinocarboxamide synthase"/>
    <property type="match status" value="1"/>
</dbReference>
<dbReference type="FunFam" id="3.30.470.20:FF:000006">
    <property type="entry name" value="Phosphoribosylaminoimidazole-succinocarboxamide synthase"/>
    <property type="match status" value="1"/>
</dbReference>
<dbReference type="Gene3D" id="3.30.470.20">
    <property type="entry name" value="ATP-grasp fold, B domain"/>
    <property type="match status" value="1"/>
</dbReference>
<dbReference type="Gene3D" id="3.30.200.20">
    <property type="entry name" value="Phosphorylase Kinase, domain 1"/>
    <property type="match status" value="1"/>
</dbReference>
<dbReference type="HAMAP" id="MF_00137">
    <property type="entry name" value="SAICAR_synth"/>
    <property type="match status" value="1"/>
</dbReference>
<dbReference type="InterPro" id="IPR028923">
    <property type="entry name" value="SAICAR_synt/ADE2_N"/>
</dbReference>
<dbReference type="InterPro" id="IPR033934">
    <property type="entry name" value="SAICAR_synt_PurC"/>
</dbReference>
<dbReference type="InterPro" id="IPR001636">
    <property type="entry name" value="SAICAR_synth"/>
</dbReference>
<dbReference type="InterPro" id="IPR050089">
    <property type="entry name" value="SAICAR_synthetase"/>
</dbReference>
<dbReference type="InterPro" id="IPR018236">
    <property type="entry name" value="SAICAR_synthetase_CS"/>
</dbReference>
<dbReference type="NCBIfam" id="TIGR00081">
    <property type="entry name" value="purC"/>
    <property type="match status" value="1"/>
</dbReference>
<dbReference type="PANTHER" id="PTHR43599">
    <property type="entry name" value="MULTIFUNCTIONAL PROTEIN ADE2"/>
    <property type="match status" value="1"/>
</dbReference>
<dbReference type="PANTHER" id="PTHR43599:SF3">
    <property type="entry name" value="SI:DKEY-6E2.2"/>
    <property type="match status" value="1"/>
</dbReference>
<dbReference type="Pfam" id="PF01259">
    <property type="entry name" value="SAICAR_synt"/>
    <property type="match status" value="1"/>
</dbReference>
<dbReference type="SUPFAM" id="SSF56104">
    <property type="entry name" value="SAICAR synthase-like"/>
    <property type="match status" value="1"/>
</dbReference>
<dbReference type="PROSITE" id="PS01057">
    <property type="entry name" value="SAICAR_SYNTHETASE_1"/>
    <property type="match status" value="1"/>
</dbReference>
<dbReference type="PROSITE" id="PS01058">
    <property type="entry name" value="SAICAR_SYNTHETASE_2"/>
    <property type="match status" value="1"/>
</dbReference>